<accession>Q48727</accession>
<accession>P71448</accession>
<accession>Q9CE65</accession>
<comment type="catalytic activity">
    <reaction>
        <text>Hydrolysis of terminal non-reducing beta-D-galactose residues in beta-D-galactosides.</text>
        <dbReference type="EC" id="3.2.1.23"/>
    </reaction>
</comment>
<comment type="similarity">
    <text evidence="2">Belongs to the glycosyl hydrolase 2 family.</text>
</comment>
<comment type="sequence caution" evidence="2">
    <conflict type="erroneous initiation">
        <sequence resource="EMBL-CDS" id="AAK06078"/>
    </conflict>
</comment>
<comment type="sequence caution" evidence="2">
    <conflict type="erroneous initiation">
        <sequence resource="EMBL-CDS" id="CAA56341"/>
    </conflict>
</comment>
<evidence type="ECO:0000250" key="1"/>
<evidence type="ECO:0000305" key="2"/>
<feature type="chain" id="PRO_0000057669" description="Beta-galactosidase">
    <location>
        <begin position="1"/>
        <end position="998"/>
    </location>
</feature>
<feature type="active site" description="Proton donor" evidence="1">
    <location>
        <position position="431"/>
    </location>
</feature>
<feature type="active site" description="Nucleophile" evidence="1">
    <location>
        <position position="508"/>
    </location>
</feature>
<feature type="sequence variant" description="In strain: ATCC 7962.">
    <original>L</original>
    <variation>F</variation>
    <location>
        <position position="34"/>
    </location>
</feature>
<feature type="sequence variant" description="In strain: ATCC 7962.">
    <original>V</original>
    <variation>G</variation>
    <location>
        <position position="182"/>
    </location>
</feature>
<feature type="sequence variant" description="In strain: ATCC 7962.">
    <original>I</original>
    <variation>M</variation>
    <location>
        <position position="237"/>
    </location>
</feature>
<feature type="sequence variant" description="In strain: ATCC 7962.">
    <original>I</original>
    <variation>T</variation>
    <location>
        <position position="629"/>
    </location>
</feature>
<feature type="sequence variant" description="In strain: ATCC 7962.">
    <original>C</original>
    <variation>Y</variation>
    <location>
        <position position="677"/>
    </location>
</feature>
<feature type="sequence variant" description="In strain: ATCC 7962.">
    <original>R</original>
    <variation>K</variation>
    <location>
        <position position="702"/>
    </location>
</feature>
<feature type="sequence variant" description="In strain: ATCC 7962.">
    <original>F</original>
    <variation>L</variation>
    <location>
        <position position="712"/>
    </location>
</feature>
<feature type="sequence variant" description="In strain: ATCC 7962.">
    <original>GI</original>
    <variation>AV</variation>
    <location>
        <begin position="784"/>
        <end position="785"/>
    </location>
</feature>
<feature type="sequence variant" description="In strain: ATCC 7962.">
    <original>T</original>
    <variation>N</variation>
    <location>
        <position position="796"/>
    </location>
</feature>
<feature type="sequence variant" description="In strain: ATCC 7962.">
    <original>D</original>
    <variation>G</variation>
    <location>
        <position position="919"/>
    </location>
</feature>
<keyword id="KW-0326">Glycosidase</keyword>
<keyword id="KW-0378">Hydrolase</keyword>
<keyword id="KW-1185">Reference proteome</keyword>
<gene>
    <name type="primary">lacZ</name>
    <name type="ordered locus">LL1980</name>
    <name type="ORF">L0025</name>
</gene>
<dbReference type="EC" id="3.2.1.23"/>
<dbReference type="EMBL" id="U60828">
    <property type="protein sequence ID" value="AAD11504.1"/>
    <property type="molecule type" value="Genomic_DNA"/>
</dbReference>
<dbReference type="EMBL" id="X80037">
    <property type="protein sequence ID" value="CAA56341.1"/>
    <property type="status" value="ALT_INIT"/>
    <property type="molecule type" value="Genomic_DNA"/>
</dbReference>
<dbReference type="EMBL" id="AE005176">
    <property type="protein sequence ID" value="AAK06078.1"/>
    <property type="status" value="ALT_INIT"/>
    <property type="molecule type" value="Genomic_DNA"/>
</dbReference>
<dbReference type="PIR" id="D86872">
    <property type="entry name" value="D86872"/>
</dbReference>
<dbReference type="RefSeq" id="NP_268137.2">
    <property type="nucleotide sequence ID" value="NC_002662.1"/>
</dbReference>
<dbReference type="RefSeq" id="WP_010906246.1">
    <property type="nucleotide sequence ID" value="NC_002662.1"/>
</dbReference>
<dbReference type="SMR" id="Q48727"/>
<dbReference type="CAZy" id="GH2">
    <property type="family name" value="Glycoside Hydrolase Family 2"/>
</dbReference>
<dbReference type="PaxDb" id="272623-L0025"/>
<dbReference type="EnsemblBacteria" id="AAK06078">
    <property type="protein sequence ID" value="AAK06078"/>
    <property type="gene ID" value="L0025"/>
</dbReference>
<dbReference type="KEGG" id="lla:L0025"/>
<dbReference type="PATRIC" id="fig|272623.7.peg.2132"/>
<dbReference type="eggNOG" id="COG3250">
    <property type="taxonomic scope" value="Bacteria"/>
</dbReference>
<dbReference type="HOGENOM" id="CLU_002346_0_2_9"/>
<dbReference type="OrthoDB" id="9762066at2"/>
<dbReference type="SABIO-RK" id="Q48727"/>
<dbReference type="Proteomes" id="UP000002196">
    <property type="component" value="Chromosome"/>
</dbReference>
<dbReference type="GO" id="GO:0009341">
    <property type="term" value="C:beta-galactosidase complex"/>
    <property type="evidence" value="ECO:0007669"/>
    <property type="project" value="InterPro"/>
</dbReference>
<dbReference type="GO" id="GO:0004565">
    <property type="term" value="F:beta-galactosidase activity"/>
    <property type="evidence" value="ECO:0007669"/>
    <property type="project" value="UniProtKB-EC"/>
</dbReference>
<dbReference type="GO" id="GO:0030246">
    <property type="term" value="F:carbohydrate binding"/>
    <property type="evidence" value="ECO:0007669"/>
    <property type="project" value="InterPro"/>
</dbReference>
<dbReference type="GO" id="GO:0005990">
    <property type="term" value="P:lactose catabolic process"/>
    <property type="evidence" value="ECO:0007669"/>
    <property type="project" value="TreeGrafter"/>
</dbReference>
<dbReference type="FunFam" id="3.20.20.80:FF:000018">
    <property type="entry name" value="Beta-galactosidase"/>
    <property type="match status" value="1"/>
</dbReference>
<dbReference type="Gene3D" id="2.70.98.10">
    <property type="match status" value="1"/>
</dbReference>
<dbReference type="Gene3D" id="2.60.120.260">
    <property type="entry name" value="Galactose-binding domain-like"/>
    <property type="match status" value="1"/>
</dbReference>
<dbReference type="Gene3D" id="3.20.20.80">
    <property type="entry name" value="Glycosidases"/>
    <property type="match status" value="1"/>
</dbReference>
<dbReference type="Gene3D" id="2.60.40.10">
    <property type="entry name" value="Immunoglobulins"/>
    <property type="match status" value="2"/>
</dbReference>
<dbReference type="InterPro" id="IPR004199">
    <property type="entry name" value="B-gal_small/dom_5"/>
</dbReference>
<dbReference type="InterPro" id="IPR050347">
    <property type="entry name" value="Bact_Beta-galactosidase"/>
</dbReference>
<dbReference type="InterPro" id="IPR036156">
    <property type="entry name" value="Beta-gal/glucu_dom_sf"/>
</dbReference>
<dbReference type="InterPro" id="IPR011013">
    <property type="entry name" value="Gal_mutarotase_sf_dom"/>
</dbReference>
<dbReference type="InterPro" id="IPR008979">
    <property type="entry name" value="Galactose-bd-like_sf"/>
</dbReference>
<dbReference type="InterPro" id="IPR014718">
    <property type="entry name" value="GH-type_carb-bd"/>
</dbReference>
<dbReference type="InterPro" id="IPR006101">
    <property type="entry name" value="Glyco_hydro_2"/>
</dbReference>
<dbReference type="InterPro" id="IPR023232">
    <property type="entry name" value="Glyco_hydro_2_AS"/>
</dbReference>
<dbReference type="InterPro" id="IPR006103">
    <property type="entry name" value="Glyco_hydro_2_cat"/>
</dbReference>
<dbReference type="InterPro" id="IPR023230">
    <property type="entry name" value="Glyco_hydro_2_CS"/>
</dbReference>
<dbReference type="InterPro" id="IPR006102">
    <property type="entry name" value="Glyco_hydro_2_Ig-like"/>
</dbReference>
<dbReference type="InterPro" id="IPR006104">
    <property type="entry name" value="Glyco_hydro_2_N"/>
</dbReference>
<dbReference type="InterPro" id="IPR017853">
    <property type="entry name" value="Glycoside_hydrolase_SF"/>
</dbReference>
<dbReference type="InterPro" id="IPR013783">
    <property type="entry name" value="Ig-like_fold"/>
</dbReference>
<dbReference type="InterPro" id="IPR032312">
    <property type="entry name" value="LacZ_4"/>
</dbReference>
<dbReference type="NCBIfam" id="NF007074">
    <property type="entry name" value="PRK09525.1"/>
    <property type="match status" value="1"/>
</dbReference>
<dbReference type="PANTHER" id="PTHR46323">
    <property type="entry name" value="BETA-GALACTOSIDASE"/>
    <property type="match status" value="1"/>
</dbReference>
<dbReference type="PANTHER" id="PTHR46323:SF2">
    <property type="entry name" value="BETA-GALACTOSIDASE"/>
    <property type="match status" value="1"/>
</dbReference>
<dbReference type="Pfam" id="PF02929">
    <property type="entry name" value="Bgal_small_N"/>
    <property type="match status" value="1"/>
</dbReference>
<dbReference type="Pfam" id="PF00703">
    <property type="entry name" value="Glyco_hydro_2"/>
    <property type="match status" value="1"/>
</dbReference>
<dbReference type="Pfam" id="PF02836">
    <property type="entry name" value="Glyco_hydro_2_C"/>
    <property type="match status" value="1"/>
</dbReference>
<dbReference type="Pfam" id="PF02837">
    <property type="entry name" value="Glyco_hydro_2_N"/>
    <property type="match status" value="1"/>
</dbReference>
<dbReference type="Pfam" id="PF16353">
    <property type="entry name" value="LacZ_4"/>
    <property type="match status" value="1"/>
</dbReference>
<dbReference type="PRINTS" id="PR00132">
    <property type="entry name" value="GLHYDRLASE2"/>
</dbReference>
<dbReference type="SMART" id="SM01038">
    <property type="entry name" value="Bgal_small_N"/>
    <property type="match status" value="1"/>
</dbReference>
<dbReference type="SUPFAM" id="SSF51445">
    <property type="entry name" value="(Trans)glycosidases"/>
    <property type="match status" value="1"/>
</dbReference>
<dbReference type="SUPFAM" id="SSF49303">
    <property type="entry name" value="beta-Galactosidase/glucuronidase domain"/>
    <property type="match status" value="2"/>
</dbReference>
<dbReference type="SUPFAM" id="SSF74650">
    <property type="entry name" value="Galactose mutarotase-like"/>
    <property type="match status" value="1"/>
</dbReference>
<dbReference type="SUPFAM" id="SSF49785">
    <property type="entry name" value="Galactose-binding domain-like"/>
    <property type="match status" value="1"/>
</dbReference>
<dbReference type="PROSITE" id="PS00719">
    <property type="entry name" value="GLYCOSYL_HYDROL_F2_1"/>
    <property type="match status" value="1"/>
</dbReference>
<dbReference type="PROSITE" id="PS00608">
    <property type="entry name" value="GLYCOSYL_HYDROL_F2_2"/>
    <property type="match status" value="1"/>
</dbReference>
<proteinExistence type="inferred from homology"/>
<name>BGAL_LACLA</name>
<protein>
    <recommendedName>
        <fullName>Beta-galactosidase</fullName>
        <ecNumber>3.2.1.23</ecNumber>
    </recommendedName>
    <alternativeName>
        <fullName>Lactase</fullName>
    </alternativeName>
</protein>
<organism>
    <name type="scientific">Lactococcus lactis subsp. lactis (strain IL1403)</name>
    <name type="common">Streptococcus lactis</name>
    <dbReference type="NCBI Taxonomy" id="272623"/>
    <lineage>
        <taxon>Bacteria</taxon>
        <taxon>Bacillati</taxon>
        <taxon>Bacillota</taxon>
        <taxon>Bacilli</taxon>
        <taxon>Lactobacillales</taxon>
        <taxon>Streptococcaceae</taxon>
        <taxon>Lactococcus</taxon>
    </lineage>
</organism>
<reference key="1">
    <citation type="journal article" date="1997" name="Biotechnol. Lett.">
        <title>Cloning and nucleotide sequence of the beta-galactosidase gene from Lactococcus lactis ssp. lactis ATCC7962.</title>
        <authorList>
            <person name="Lee J.M."/>
            <person name="Park J.H."/>
            <person name="Lee W.K."/>
            <person name="Chang H.C."/>
            <person name="Kim J.H."/>
            <person name="Chung D.K."/>
            <person name="Lee H.J."/>
        </authorList>
    </citation>
    <scope>NUCLEOTIDE SEQUENCE [GENOMIC DNA]</scope>
    <source>
        <strain>ATCC 7962</strain>
    </source>
</reference>
<reference key="2">
    <citation type="journal article" date="1996" name="DNA Seq.">
        <title>Cloning, DNA sequence, and regulation of expression of a gene encoding beta-galactosidase from Lactococcus lactis.</title>
        <authorList>
            <person name="Griffin H.G."/>
            <person name="Maccormick C.A."/>
            <person name="Gasson M.J."/>
        </authorList>
    </citation>
    <scope>NUCLEOTIDE SEQUENCE [GENOMIC DNA]</scope>
    <source>
        <strain>ATCC 7962</strain>
    </source>
</reference>
<reference key="3">
    <citation type="journal article" date="2001" name="Genome Res.">
        <title>The complete genome sequence of the lactic acid bacterium Lactococcus lactis ssp. lactis IL1403.</title>
        <authorList>
            <person name="Bolotin A."/>
            <person name="Wincker P."/>
            <person name="Mauger S."/>
            <person name="Jaillon O."/>
            <person name="Malarme K."/>
            <person name="Weissenbach J."/>
            <person name="Ehrlich S.D."/>
            <person name="Sorokin A."/>
        </authorList>
    </citation>
    <scope>NUCLEOTIDE SEQUENCE [LARGE SCALE GENOMIC DNA]</scope>
    <source>
        <strain>IL1403</strain>
    </source>
</reference>
<sequence length="998" mass="115440">MAMMTMIDVLERKDWENPVVSNWNRLPMHTPMDLLEKQSLNGLWNFDHFSRISDVPKNWLELTESKTEIIVPSNWQIEFKDKSDVPIYTNVTYPIPIQPPYVPEANPVGAYSRYFDITKEWLESGHVHLTFEGVGSAFHFWLNGEYGGYSEDSRLPAEFDISNLAKEGQNCLKVLVFRWSKVTYFEDQDMWRMSGIFRSVNLQWLPDNYLLDFSIKTDLDEDLDFANVKLQAYAKNIDDACLEFKLYDDEQLIGECHGFDAEIGVVNPKLWSDEIPYLYRLELTLMDRSGAVFHKETKKIGIRKIAIEKGQLKINGKALLVRGVNKHEFTPEHGYVVSEEVMIKDIKLMKEHNFNAVRCSHYPNDSRWYELCDEYGLYVMDEANIETHGMTPMNRLTNDPTYLPLMSERVTRMVMRDRNHPSIIIWSLGNESGYGSNHQALYDWCKSFDSSRPVHYEGGDDASRGATDATDIICPMYARVDSPSINAPYSLKTWMGVAGENRPLILCEYAHDMGNSLGGFGKYWQAFREIDRLQGGFIWDWVDQGLLKDGNYAYGGDFGDKPNDRQFSLNGLVFPNRQAKPALREAKYWQQYYQFELEKTPLGQVFAFTVTNEYLFRSTDNEKLCYQLINGLEVLWENELILNMPAGGSMRIDLSELPIDGTDNLFLNIQVKTIEKCNLLESDFEVAHQQFVLQEKINFTDRIDSNEEITLFEDEELLTVRSAKQKFIFNKSNGNLSRWLDEKGNEKLLHELSEQFTRAPLDNDIGVSEVEHIDPNAWLERWKGIGFYELKTLLKTMIIQATENEVIISVQTDYEAKGKIAFSTIREYHIFRNGELLLKVDFKRNIEFPEPARIGLSLQLAEKAENVTYFGLGPDENYPDRRGASLFGQWNLRITDMTTPYIFPSENGLRMETRELNYDRLKVRAMGQSFAFNLSPYSQNQLAKKGHWHLLEEEAGTWLNIDGFHMGVGGDDSWSPSVAQEYLLTKGNYHYEVSFKLT</sequence>